<keyword id="KW-0391">Immunity</keyword>
<keyword id="KW-0399">Innate immunity</keyword>
<keyword id="KW-1185">Reference proteome</keyword>
<accession>Q6P7I6</accession>
<reference key="1">
    <citation type="submission" date="2003-11" db="EMBL/GenBank/DDBJ databases">
        <authorList>
            <consortium name="NIH - Xenopus Gene Collection (XGC) project"/>
        </authorList>
    </citation>
    <scope>NUCLEOTIDE SEQUENCE [LARGE SCALE MRNA]</scope>
    <source>
        <tissue>Embryo</tissue>
    </source>
</reference>
<organism>
    <name type="scientific">Xenopus laevis</name>
    <name type="common">African clawed frog</name>
    <dbReference type="NCBI Taxonomy" id="8355"/>
    <lineage>
        <taxon>Eukaryota</taxon>
        <taxon>Metazoa</taxon>
        <taxon>Chordata</taxon>
        <taxon>Craniata</taxon>
        <taxon>Vertebrata</taxon>
        <taxon>Euteleostomi</taxon>
        <taxon>Amphibia</taxon>
        <taxon>Batrachia</taxon>
        <taxon>Anura</taxon>
        <taxon>Pipoidea</taxon>
        <taxon>Pipidae</taxon>
        <taxon>Xenopodinae</taxon>
        <taxon>Xenopus</taxon>
        <taxon>Xenopus</taxon>
    </lineage>
</organism>
<proteinExistence type="evidence at transcript level"/>
<evidence type="ECO:0000250" key="1"/>
<evidence type="ECO:0000305" key="2"/>
<feature type="chain" id="PRO_0000285775" description="Tumor necrosis factor alpha-induced protein 8-like protein 2">
    <location>
        <begin position="1"/>
        <end position="186"/>
    </location>
</feature>
<dbReference type="EMBL" id="BC061657">
    <property type="protein sequence ID" value="AAH61657.1"/>
    <property type="molecule type" value="mRNA"/>
</dbReference>
<dbReference type="RefSeq" id="NP_001083608.1">
    <property type="nucleotide sequence ID" value="NM_001090139.1"/>
</dbReference>
<dbReference type="RefSeq" id="XP_018084258.1">
    <property type="nucleotide sequence ID" value="XM_018228769.1"/>
</dbReference>
<dbReference type="SMR" id="Q6P7I6"/>
<dbReference type="DNASU" id="399018"/>
<dbReference type="GeneID" id="399018"/>
<dbReference type="KEGG" id="xla:399018"/>
<dbReference type="AGR" id="Xenbase:XB-GENE-1005120"/>
<dbReference type="CTD" id="399018"/>
<dbReference type="Xenbase" id="XB-GENE-1005120">
    <property type="gene designation" value="tnfaip8l2.L"/>
</dbReference>
<dbReference type="OMA" id="HNRINHV"/>
<dbReference type="OrthoDB" id="10055976at2759"/>
<dbReference type="Proteomes" id="UP000186698">
    <property type="component" value="Chromosome 8L"/>
</dbReference>
<dbReference type="Bgee" id="399018">
    <property type="expression patterns" value="Expressed in spleen and 19 other cell types or tissues"/>
</dbReference>
<dbReference type="GO" id="GO:0005737">
    <property type="term" value="C:cytoplasm"/>
    <property type="evidence" value="ECO:0000318"/>
    <property type="project" value="GO_Central"/>
</dbReference>
<dbReference type="GO" id="GO:0045087">
    <property type="term" value="P:innate immune response"/>
    <property type="evidence" value="ECO:0007669"/>
    <property type="project" value="UniProtKB-KW"/>
</dbReference>
<dbReference type="GO" id="GO:0050728">
    <property type="term" value="P:negative regulation of inflammatory response"/>
    <property type="evidence" value="ECO:0000318"/>
    <property type="project" value="GO_Central"/>
</dbReference>
<dbReference type="GO" id="GO:0050868">
    <property type="term" value="P:negative regulation of T cell activation"/>
    <property type="evidence" value="ECO:0000318"/>
    <property type="project" value="GO_Central"/>
</dbReference>
<dbReference type="GO" id="GO:0042981">
    <property type="term" value="P:regulation of apoptotic process"/>
    <property type="evidence" value="ECO:0007669"/>
    <property type="project" value="InterPro"/>
</dbReference>
<dbReference type="FunFam" id="1.20.1440.160:FF:000001">
    <property type="entry name" value="Tumor necrosis factor alpha-induced protein 8-like 1"/>
    <property type="match status" value="1"/>
</dbReference>
<dbReference type="Gene3D" id="1.20.1440.160">
    <property type="entry name" value="Tumor necrosis factor alpha-induced protein 8-like"/>
    <property type="match status" value="1"/>
</dbReference>
<dbReference type="InterPro" id="IPR008477">
    <property type="entry name" value="TNFAIP8-like"/>
</dbReference>
<dbReference type="InterPro" id="IPR038355">
    <property type="entry name" value="TNFAIP8_sf"/>
</dbReference>
<dbReference type="PANTHER" id="PTHR12757:SF4">
    <property type="entry name" value="TUMOR NECROSIS FACTOR ALPHA-INDUCED PROTEIN 8-LIKE PROTEIN 2"/>
    <property type="match status" value="1"/>
</dbReference>
<dbReference type="PANTHER" id="PTHR12757">
    <property type="entry name" value="TUMOR NECROSIS FACTOR INDUCED PROTEIN"/>
    <property type="match status" value="1"/>
</dbReference>
<dbReference type="Pfam" id="PF05527">
    <property type="entry name" value="DUF758"/>
    <property type="match status" value="1"/>
</dbReference>
<protein>
    <recommendedName>
        <fullName>Tumor necrosis factor alpha-induced protein 8-like protein 2</fullName>
        <shortName>TIPE2</shortName>
        <shortName>TNF alpha-induced protein 8-like protein 2</shortName>
        <shortName>TNFAIP8-like protein 2</shortName>
    </recommendedName>
</protein>
<name>TP8L2_XENLA</name>
<comment type="function">
    <text evidence="1">Acts as a negative regulator of innate and adaptive immunity by maintaining immune homeostasis. Negative regulator of Toll-like receptor and T-cell receptor function. Prevents hyperresponsiveness of the immune system and maintains immune homeostasis. Inhibits jun/ap1 and NF-kappa-B activation. Promotes Fas-induced apoptosis (By similarity).</text>
</comment>
<comment type="domain">
    <text evidence="1">The central region was initially thought to constitute a DED (death effector) domain. However, 3D-structure data reveal a previously uncharacterized fold that is different from the predicted fold of a DED (death effector) domain. It consists of a large, hydrophobic central cavity that is poised for cofactor binding (By similarity).</text>
</comment>
<comment type="similarity">
    <text evidence="2">Belongs to the TNFAIP8 family. TNFAIP8L2 subfamily.</text>
</comment>
<gene>
    <name type="primary">tnfaip8l2</name>
</gene>
<sequence>METFSSKDLALQAQKKILSRMASKSMVNMFIDETSSEILDELYRVSKEYTKNKTESQKVIKNLIKIAVKIGVLFRHNRFSPEELVLAKDFKNRLHNGAMTAISFYEVEFTFEKDVLPEILMECKNLVLRLVEKHLTPKSHGRIQHVFNHFADPEMLSQLYDTKSSLRPHLQKICNGLNKLIEEEKL</sequence>